<organism>
    <name type="scientific">Drosophila melanogaster</name>
    <name type="common">Fruit fly</name>
    <dbReference type="NCBI Taxonomy" id="7227"/>
    <lineage>
        <taxon>Eukaryota</taxon>
        <taxon>Metazoa</taxon>
        <taxon>Ecdysozoa</taxon>
        <taxon>Arthropoda</taxon>
        <taxon>Hexapoda</taxon>
        <taxon>Insecta</taxon>
        <taxon>Pterygota</taxon>
        <taxon>Neoptera</taxon>
        <taxon>Endopterygota</taxon>
        <taxon>Diptera</taxon>
        <taxon>Brachycera</taxon>
        <taxon>Muscomorpha</taxon>
        <taxon>Ephydroidea</taxon>
        <taxon>Drosophilidae</taxon>
        <taxon>Drosophila</taxon>
        <taxon>Sophophora</taxon>
    </lineage>
</organism>
<dbReference type="EMBL" id="AB107287">
    <property type="protein sequence ID" value="BAC67592.1"/>
    <property type="molecule type" value="mRNA"/>
</dbReference>
<dbReference type="EMBL" id="AB107288">
    <property type="protein sequence ID" value="BAC67593.1"/>
    <property type="molecule type" value="mRNA"/>
</dbReference>
<dbReference type="EMBL" id="AB107289">
    <property type="protein sequence ID" value="BAC67594.1"/>
    <property type="molecule type" value="mRNA"/>
</dbReference>
<dbReference type="EMBL" id="AB107290">
    <property type="protein sequence ID" value="BAC67595.1"/>
    <property type="molecule type" value="mRNA"/>
</dbReference>
<dbReference type="EMBL" id="AB107307">
    <property type="protein sequence ID" value="BAC67612.1"/>
    <property type="molecule type" value="mRNA"/>
</dbReference>
<dbReference type="EMBL" id="AB107308">
    <property type="protein sequence ID" value="BAC67613.1"/>
    <property type="molecule type" value="mRNA"/>
</dbReference>
<dbReference type="EMBL" id="AB107309">
    <property type="protein sequence ID" value="BAC67614.1"/>
    <property type="molecule type" value="mRNA"/>
</dbReference>
<dbReference type="EMBL" id="AB107310">
    <property type="protein sequence ID" value="BAC67615.1"/>
    <property type="molecule type" value="mRNA"/>
</dbReference>
<dbReference type="EMBL" id="AB107327">
    <property type="protein sequence ID" value="BAC67632.1"/>
    <property type="molecule type" value="mRNA"/>
</dbReference>
<dbReference type="EMBL" id="AB107328">
    <property type="protein sequence ID" value="BAC67633.1"/>
    <property type="molecule type" value="mRNA"/>
</dbReference>
<dbReference type="EMBL" id="AB107329">
    <property type="protein sequence ID" value="BAC67634.1"/>
    <property type="molecule type" value="mRNA"/>
</dbReference>
<dbReference type="EMBL" id="AB107330">
    <property type="protein sequence ID" value="BAC67635.1"/>
    <property type="molecule type" value="mRNA"/>
</dbReference>
<dbReference type="EMBL" id="AB107347">
    <property type="protein sequence ID" value="BAC67652.1"/>
    <property type="molecule type" value="mRNA"/>
</dbReference>
<dbReference type="EMBL" id="AB107348">
    <property type="protein sequence ID" value="BAC67653.1"/>
    <property type="molecule type" value="mRNA"/>
</dbReference>
<dbReference type="EMBL" id="AB107349">
    <property type="protein sequence ID" value="BAC67654.1"/>
    <property type="molecule type" value="mRNA"/>
</dbReference>
<dbReference type="EMBL" id="AB107350">
    <property type="protein sequence ID" value="BAC67655.1"/>
    <property type="molecule type" value="mRNA"/>
</dbReference>
<dbReference type="EMBL" id="AE013599">
    <property type="protein sequence ID" value="AAF58781.3"/>
    <property type="molecule type" value="Genomic_DNA"/>
</dbReference>
<dbReference type="EMBL" id="AE013599">
    <property type="protein sequence ID" value="AAO41424.2"/>
    <property type="molecule type" value="Genomic_DNA"/>
</dbReference>
<dbReference type="EMBL" id="AE013599">
    <property type="protein sequence ID" value="AAS64874.1"/>
    <property type="molecule type" value="Genomic_DNA"/>
</dbReference>
<dbReference type="EMBL" id="AE013599">
    <property type="protein sequence ID" value="AAS64875.1"/>
    <property type="molecule type" value="Genomic_DNA"/>
</dbReference>
<dbReference type="EMBL" id="AE013599">
    <property type="protein sequence ID" value="AAS64876.1"/>
    <property type="molecule type" value="Genomic_DNA"/>
</dbReference>
<dbReference type="RefSeq" id="NP_788308.3">
    <property type="nucleotide sequence ID" value="NM_176128.5"/>
</dbReference>
<dbReference type="RefSeq" id="NP_788309.2">
    <molecule id="Q9V5M3-2"/>
    <property type="nucleotide sequence ID" value="NM_176129.5"/>
</dbReference>
<dbReference type="RefSeq" id="NP_788313.1">
    <property type="nucleotide sequence ID" value="NM_176133.5"/>
</dbReference>
<dbReference type="RefSeq" id="NP_995804.1">
    <molecule id="Q9V5M3-5"/>
    <property type="nucleotide sequence ID" value="NM_206082.4"/>
</dbReference>
<dbReference type="RefSeq" id="NP_995805.1">
    <molecule id="Q9V5M3-4"/>
    <property type="nucleotide sequence ID" value="NM_206083.4"/>
</dbReference>
<dbReference type="RefSeq" id="NP_995806.1">
    <molecule id="Q9V5M3-3"/>
    <property type="nucleotide sequence ID" value="NM_206084.4"/>
</dbReference>
<dbReference type="BioGRID" id="69126">
    <property type="interactions" value="58"/>
</dbReference>
<dbReference type="IntAct" id="Q9V5M3">
    <property type="interactions" value="2"/>
</dbReference>
<dbReference type="DNASU" id="44548"/>
<dbReference type="EnsemblMetazoa" id="FBtr0089361">
    <molecule id="Q9V5M3-2"/>
    <property type="protein sequence ID" value="FBpp0088395"/>
    <property type="gene ID" value="FBgn0283521"/>
</dbReference>
<dbReference type="EnsemblMetazoa" id="FBtr0089364">
    <molecule id="Q9V5M3-3"/>
    <property type="protein sequence ID" value="FBpp0088950"/>
    <property type="gene ID" value="FBgn0283521"/>
</dbReference>
<dbReference type="EnsemblMetazoa" id="FBtr0089365">
    <molecule id="Q9V5M3-4"/>
    <property type="protein sequence ID" value="FBpp0088951"/>
    <property type="gene ID" value="FBgn0283521"/>
</dbReference>
<dbReference type="EnsemblMetazoa" id="FBtr0089366">
    <molecule id="Q9V5M3-5"/>
    <property type="protein sequence ID" value="FBpp0088948"/>
    <property type="gene ID" value="FBgn0283521"/>
</dbReference>
<dbReference type="GeneID" id="44548"/>
<dbReference type="AGR" id="FB:FBgn0283521"/>
<dbReference type="CTD" id="44548"/>
<dbReference type="FlyBase" id="FBgn0283521">
    <property type="gene designation" value="lola"/>
</dbReference>
<dbReference type="VEuPathDB" id="VectorBase:FBgn0283521"/>
<dbReference type="GeneTree" id="ENSGT00940000174551"/>
<dbReference type="HOGENOM" id="CLU_010740_5_0_1"/>
<dbReference type="OrthoDB" id="407106at2759"/>
<dbReference type="SignaLink" id="Q9V5M3"/>
<dbReference type="BioGRID-ORCS" id="44548">
    <property type="hits" value="1 hit in 1 CRISPR screen"/>
</dbReference>
<dbReference type="ChiTaRS" id="lola">
    <property type="organism name" value="fly"/>
</dbReference>
<dbReference type="GenomeRNAi" id="44548"/>
<dbReference type="Proteomes" id="UP000000803">
    <property type="component" value="Chromosome 2R"/>
</dbReference>
<dbReference type="Bgee" id="FBgn0283521">
    <property type="expression patterns" value="Expressed in adult differentiating enterocyte in digestive tract and 312 other cell types or tissues"/>
</dbReference>
<dbReference type="ExpressionAtlas" id="Q9V5M3">
    <property type="expression patterns" value="baseline and differential"/>
</dbReference>
<dbReference type="GO" id="GO:0005654">
    <property type="term" value="C:nucleoplasm"/>
    <property type="evidence" value="ECO:0007005"/>
    <property type="project" value="FlyBase"/>
</dbReference>
<dbReference type="GO" id="GO:0005634">
    <property type="term" value="C:nucleus"/>
    <property type="evidence" value="ECO:0000314"/>
    <property type="project" value="UniProtKB"/>
</dbReference>
<dbReference type="GO" id="GO:0003677">
    <property type="term" value="F:DNA binding"/>
    <property type="evidence" value="ECO:0007669"/>
    <property type="project" value="UniProtKB-KW"/>
</dbReference>
<dbReference type="GO" id="GO:0003700">
    <property type="term" value="F:DNA-binding transcription factor activity"/>
    <property type="evidence" value="ECO:0000250"/>
    <property type="project" value="FlyBase"/>
</dbReference>
<dbReference type="GO" id="GO:0008270">
    <property type="term" value="F:zinc ion binding"/>
    <property type="evidence" value="ECO:0007669"/>
    <property type="project" value="UniProtKB-KW"/>
</dbReference>
<dbReference type="GO" id="GO:0007411">
    <property type="term" value="P:axon guidance"/>
    <property type="evidence" value="ECO:0000315"/>
    <property type="project" value="UniProtKB"/>
</dbReference>
<dbReference type="GO" id="GO:0016199">
    <property type="term" value="P:axon midline choice point recognition"/>
    <property type="evidence" value="ECO:0000315"/>
    <property type="project" value="UniProtKB"/>
</dbReference>
<dbReference type="GO" id="GO:0007409">
    <property type="term" value="P:axonogenesis"/>
    <property type="evidence" value="ECO:0000315"/>
    <property type="project" value="UniProtKB"/>
</dbReference>
<dbReference type="GO" id="GO:0048813">
    <property type="term" value="P:dendrite morphogenesis"/>
    <property type="evidence" value="ECO:0000315"/>
    <property type="project" value="FlyBase"/>
</dbReference>
<dbReference type="GO" id="GO:0008406">
    <property type="term" value="P:gonad development"/>
    <property type="evidence" value="ECO:0000315"/>
    <property type="project" value="FlyBase"/>
</dbReference>
<dbReference type="GO" id="GO:0035167">
    <property type="term" value="P:larval lymph gland hemopoiesis"/>
    <property type="evidence" value="ECO:0000315"/>
    <property type="project" value="FlyBase"/>
</dbReference>
<dbReference type="GO" id="GO:0007526">
    <property type="term" value="P:larval somatic muscle development"/>
    <property type="evidence" value="ECO:0000315"/>
    <property type="project" value="FlyBase"/>
</dbReference>
<dbReference type="GO" id="GO:0045476">
    <property type="term" value="P:nurse cell apoptotic process"/>
    <property type="evidence" value="ECO:0000315"/>
    <property type="project" value="FlyBase"/>
</dbReference>
<dbReference type="GO" id="GO:0045893">
    <property type="term" value="P:positive regulation of DNA-templated transcription"/>
    <property type="evidence" value="ECO:0000250"/>
    <property type="project" value="UniProtKB"/>
</dbReference>
<dbReference type="GO" id="GO:0007464">
    <property type="term" value="P:R3/R4 cell fate commitment"/>
    <property type="evidence" value="ECO:0000315"/>
    <property type="project" value="FlyBase"/>
</dbReference>
<dbReference type="GO" id="GO:0045467">
    <property type="term" value="P:R7 cell development"/>
    <property type="evidence" value="ECO:0000315"/>
    <property type="project" value="FlyBase"/>
</dbReference>
<dbReference type="GO" id="GO:0006355">
    <property type="term" value="P:regulation of DNA-templated transcription"/>
    <property type="evidence" value="ECO:0000315"/>
    <property type="project" value="FlyBase"/>
</dbReference>
<dbReference type="GO" id="GO:0006357">
    <property type="term" value="P:regulation of transcription by RNA polymerase II"/>
    <property type="evidence" value="ECO:0000318"/>
    <property type="project" value="GO_Central"/>
</dbReference>
<dbReference type="CDD" id="cd18315">
    <property type="entry name" value="BTB_POZ_BAB-like"/>
    <property type="match status" value="1"/>
</dbReference>
<dbReference type="FunFam" id="3.30.710.10:FF:000091">
    <property type="entry name" value="Lola, isoform F"/>
    <property type="match status" value="1"/>
</dbReference>
<dbReference type="Gene3D" id="3.30.160.60">
    <property type="entry name" value="Classic Zinc Finger"/>
    <property type="match status" value="1"/>
</dbReference>
<dbReference type="Gene3D" id="3.30.710.10">
    <property type="entry name" value="Potassium Channel Kv1.1, Chain A"/>
    <property type="match status" value="1"/>
</dbReference>
<dbReference type="InterPro" id="IPR000210">
    <property type="entry name" value="BTB/POZ_dom"/>
</dbReference>
<dbReference type="InterPro" id="IPR051095">
    <property type="entry name" value="Dros_DevTransReg"/>
</dbReference>
<dbReference type="InterPro" id="IPR011333">
    <property type="entry name" value="SKP1/BTB/POZ_sf"/>
</dbReference>
<dbReference type="InterPro" id="IPR036236">
    <property type="entry name" value="Znf_C2H2_sf"/>
</dbReference>
<dbReference type="InterPro" id="IPR013087">
    <property type="entry name" value="Znf_C2H2_type"/>
</dbReference>
<dbReference type="PANTHER" id="PTHR23110">
    <property type="entry name" value="BTB DOMAIN TRANSCRIPTION FACTOR"/>
    <property type="match status" value="1"/>
</dbReference>
<dbReference type="PANTHER" id="PTHR23110:SF111">
    <property type="entry name" value="LONGITUDINALS LACKING PROTEIN, ISOFORMS F_I_K_T"/>
    <property type="match status" value="1"/>
</dbReference>
<dbReference type="Pfam" id="PF00651">
    <property type="entry name" value="BTB"/>
    <property type="match status" value="1"/>
</dbReference>
<dbReference type="SMART" id="SM00225">
    <property type="entry name" value="BTB"/>
    <property type="match status" value="1"/>
</dbReference>
<dbReference type="SMART" id="SM00355">
    <property type="entry name" value="ZnF_C2H2"/>
    <property type="match status" value="2"/>
</dbReference>
<dbReference type="SUPFAM" id="SSF57667">
    <property type="entry name" value="beta-beta-alpha zinc fingers"/>
    <property type="match status" value="2"/>
</dbReference>
<dbReference type="SUPFAM" id="SSF54695">
    <property type="entry name" value="POZ domain"/>
    <property type="match status" value="1"/>
</dbReference>
<dbReference type="PROSITE" id="PS50097">
    <property type="entry name" value="BTB"/>
    <property type="match status" value="1"/>
</dbReference>
<dbReference type="PROSITE" id="PS00028">
    <property type="entry name" value="ZINC_FINGER_C2H2_1"/>
    <property type="match status" value="1"/>
</dbReference>
<dbReference type="PROSITE" id="PS50157">
    <property type="entry name" value="ZINC_FINGER_C2H2_2"/>
    <property type="match status" value="2"/>
</dbReference>
<evidence type="ECO:0000255" key="1">
    <source>
        <dbReference type="PROSITE-ProRule" id="PRU00037"/>
    </source>
</evidence>
<evidence type="ECO:0000255" key="2">
    <source>
        <dbReference type="PROSITE-ProRule" id="PRU00042"/>
    </source>
</evidence>
<evidence type="ECO:0000256" key="3">
    <source>
        <dbReference type="SAM" id="MobiDB-lite"/>
    </source>
</evidence>
<evidence type="ECO:0000269" key="4">
    <source>
    </source>
</evidence>
<evidence type="ECO:0000269" key="5">
    <source>
    </source>
</evidence>
<evidence type="ECO:0000269" key="6">
    <source>
    </source>
</evidence>
<evidence type="ECO:0000269" key="7">
    <source>
    </source>
</evidence>
<evidence type="ECO:0000269" key="8">
    <source>
    </source>
</evidence>
<evidence type="ECO:0000269" key="9">
    <source>
    </source>
</evidence>
<evidence type="ECO:0000303" key="10">
    <source>
    </source>
</evidence>
<evidence type="ECO:0000303" key="11">
    <source>
    </source>
</evidence>
<evidence type="ECO:0000303" key="12">
    <source>
    </source>
</evidence>
<evidence type="ECO:0000305" key="13"/>
<evidence type="ECO:0000312" key="14">
    <source>
        <dbReference type="EMBL" id="AAF58781.3"/>
    </source>
</evidence>
<evidence type="ECO:0000312" key="15">
    <source>
        <dbReference type="EMBL" id="BAC67593.1"/>
    </source>
</evidence>
<evidence type="ECO:0000312" key="16">
    <source>
        <dbReference type="FlyBase" id="FBgn0283521"/>
    </source>
</evidence>
<sequence>MDDDQQFCLRWNNHQSTLISVFDTLLENETLVDCTLAAEGKFLKAHKVVLSACSPYFATLLQEQYDKHPIFILKDVKYQELRAMMDYMYRGEVNISQDQLAALLKAAESLQIKGLSDNRTGGGVAPKPESSGHHRGGKLSGAYTLEQTKRARLATGGAMDTSGDVSGSREGSSSPSRRRRKVRRRSMENDAHDNSNSSVLQAAASNQSILQQTGAGLAVSALVTTQLSSGPAAGTSSQASSTQQQQPLTSTNVTKKTESAKLTSSTAAPASGASASAAVQQAHLHQQQAQTTSDAINTENVQAQSQGGAQGVQGDDEDIDEGSAVGGPNSATGPNPASASASAVHAGVVVKQLASVVDKSSSNHKHKIKDNSVSSVGSEMVIEPKAEYDDDAHDENVEDLTLDEEDMTMEELDQTAGTSQGGEGSSQTYATWQHDRSQDELGLMAQDAQQRDPQDGYWTILETVPYSIASAAPNQTLTTATTLSNGGSSLLTGATVVVELPPDDLGNPVGNIQYTIPALTKNATTNTNTTSLLHKPQATTIQIVKQQHQQQHQQQHQHPQQQHQPQQQQHRQHLTIQQSQTHARQEYIKIDTSRLEDKMLLRDVMQYGATSIAMAPQSATTTVVSTHPVESGLLLADADEAERELELEAMKVDQHDEEHLLDDEGYVIEKIHGDGETVNQPQEKLYINGMSNIIHTATTMTLQPDDCKYACNVCGKTYKIKGSLKRHKNYECGVEPNLKCPHCPHKCKCVLAQVVNFVRHGPKNQLLCQCGRYYNTLSRLMLHQREECQDFKRFQCDFCLKWFKRRSHLNRHKKLHDAELFLEPLSKQKPKTTSGQNLSHDANTDDEVATTNPAATEDESNYPFTSEIKIENEFDEFI</sequence>
<reference evidence="13 15" key="1">
    <citation type="journal article" date="2003" name="Gene">
        <title>Drosophila lola encodes a family of BTB-transcription regulators with highly variable C-terminal domains containing zinc finger motifs.</title>
        <authorList>
            <person name="Ohsako T."/>
            <person name="Horiuchi T."/>
            <person name="Matsuo T."/>
            <person name="Komaya S."/>
            <person name="Aigaki T."/>
        </authorList>
    </citation>
    <scope>NUCLEOTIDE SEQUENCE [MRNA] (ISOFORMS O; W; X AND Y)</scope>
    <source>
        <strain evidence="15">Canton-S</strain>
    </source>
</reference>
<reference evidence="14" key="2">
    <citation type="journal article" date="2000" name="Science">
        <title>The genome sequence of Drosophila melanogaster.</title>
        <authorList>
            <person name="Adams M.D."/>
            <person name="Celniker S.E."/>
            <person name="Holt R.A."/>
            <person name="Evans C.A."/>
            <person name="Gocayne J.D."/>
            <person name="Amanatides P.G."/>
            <person name="Scherer S.E."/>
            <person name="Li P.W."/>
            <person name="Hoskins R.A."/>
            <person name="Galle R.F."/>
            <person name="George R.A."/>
            <person name="Lewis S.E."/>
            <person name="Richards S."/>
            <person name="Ashburner M."/>
            <person name="Henderson S.N."/>
            <person name="Sutton G.G."/>
            <person name="Wortman J.R."/>
            <person name="Yandell M.D."/>
            <person name="Zhang Q."/>
            <person name="Chen L.X."/>
            <person name="Brandon R.C."/>
            <person name="Rogers Y.-H.C."/>
            <person name="Blazej R.G."/>
            <person name="Champe M."/>
            <person name="Pfeiffer B.D."/>
            <person name="Wan K.H."/>
            <person name="Doyle C."/>
            <person name="Baxter E.G."/>
            <person name="Helt G."/>
            <person name="Nelson C.R."/>
            <person name="Miklos G.L.G."/>
            <person name="Abril J.F."/>
            <person name="Agbayani A."/>
            <person name="An H.-J."/>
            <person name="Andrews-Pfannkoch C."/>
            <person name="Baldwin D."/>
            <person name="Ballew R.M."/>
            <person name="Basu A."/>
            <person name="Baxendale J."/>
            <person name="Bayraktaroglu L."/>
            <person name="Beasley E.M."/>
            <person name="Beeson K.Y."/>
            <person name="Benos P.V."/>
            <person name="Berman B.P."/>
            <person name="Bhandari D."/>
            <person name="Bolshakov S."/>
            <person name="Borkova D."/>
            <person name="Botchan M.R."/>
            <person name="Bouck J."/>
            <person name="Brokstein P."/>
            <person name="Brottier P."/>
            <person name="Burtis K.C."/>
            <person name="Busam D.A."/>
            <person name="Butler H."/>
            <person name="Cadieu E."/>
            <person name="Center A."/>
            <person name="Chandra I."/>
            <person name="Cherry J.M."/>
            <person name="Cawley S."/>
            <person name="Dahlke C."/>
            <person name="Davenport L.B."/>
            <person name="Davies P."/>
            <person name="de Pablos B."/>
            <person name="Delcher A."/>
            <person name="Deng Z."/>
            <person name="Mays A.D."/>
            <person name="Dew I."/>
            <person name="Dietz S.M."/>
            <person name="Dodson K."/>
            <person name="Doup L.E."/>
            <person name="Downes M."/>
            <person name="Dugan-Rocha S."/>
            <person name="Dunkov B.C."/>
            <person name="Dunn P."/>
            <person name="Durbin K.J."/>
            <person name="Evangelista C.C."/>
            <person name="Ferraz C."/>
            <person name="Ferriera S."/>
            <person name="Fleischmann W."/>
            <person name="Fosler C."/>
            <person name="Gabrielian A.E."/>
            <person name="Garg N.S."/>
            <person name="Gelbart W.M."/>
            <person name="Glasser K."/>
            <person name="Glodek A."/>
            <person name="Gong F."/>
            <person name="Gorrell J.H."/>
            <person name="Gu Z."/>
            <person name="Guan P."/>
            <person name="Harris M."/>
            <person name="Harris N.L."/>
            <person name="Harvey D.A."/>
            <person name="Heiman T.J."/>
            <person name="Hernandez J.R."/>
            <person name="Houck J."/>
            <person name="Hostin D."/>
            <person name="Houston K.A."/>
            <person name="Howland T.J."/>
            <person name="Wei M.-H."/>
            <person name="Ibegwam C."/>
            <person name="Jalali M."/>
            <person name="Kalush F."/>
            <person name="Karpen G.H."/>
            <person name="Ke Z."/>
            <person name="Kennison J.A."/>
            <person name="Ketchum K.A."/>
            <person name="Kimmel B.E."/>
            <person name="Kodira C.D."/>
            <person name="Kraft C.L."/>
            <person name="Kravitz S."/>
            <person name="Kulp D."/>
            <person name="Lai Z."/>
            <person name="Lasko P."/>
            <person name="Lei Y."/>
            <person name="Levitsky A.A."/>
            <person name="Li J.H."/>
            <person name="Li Z."/>
            <person name="Liang Y."/>
            <person name="Lin X."/>
            <person name="Liu X."/>
            <person name="Mattei B."/>
            <person name="McIntosh T.C."/>
            <person name="McLeod M.P."/>
            <person name="McPherson D."/>
            <person name="Merkulov G."/>
            <person name="Milshina N.V."/>
            <person name="Mobarry C."/>
            <person name="Morris J."/>
            <person name="Moshrefi A."/>
            <person name="Mount S.M."/>
            <person name="Moy M."/>
            <person name="Murphy B."/>
            <person name="Murphy L."/>
            <person name="Muzny D.M."/>
            <person name="Nelson D.L."/>
            <person name="Nelson D.R."/>
            <person name="Nelson K.A."/>
            <person name="Nixon K."/>
            <person name="Nusskern D.R."/>
            <person name="Pacleb J.M."/>
            <person name="Palazzolo M."/>
            <person name="Pittman G.S."/>
            <person name="Pan S."/>
            <person name="Pollard J."/>
            <person name="Puri V."/>
            <person name="Reese M.G."/>
            <person name="Reinert K."/>
            <person name="Remington K."/>
            <person name="Saunders R.D.C."/>
            <person name="Scheeler F."/>
            <person name="Shen H."/>
            <person name="Shue B.C."/>
            <person name="Siden-Kiamos I."/>
            <person name="Simpson M."/>
            <person name="Skupski M.P."/>
            <person name="Smith T.J."/>
            <person name="Spier E."/>
            <person name="Spradling A.C."/>
            <person name="Stapleton M."/>
            <person name="Strong R."/>
            <person name="Sun E."/>
            <person name="Svirskas R."/>
            <person name="Tector C."/>
            <person name="Turner R."/>
            <person name="Venter E."/>
            <person name="Wang A.H."/>
            <person name="Wang X."/>
            <person name="Wang Z.-Y."/>
            <person name="Wassarman D.A."/>
            <person name="Weinstock G.M."/>
            <person name="Weissenbach J."/>
            <person name="Williams S.M."/>
            <person name="Woodage T."/>
            <person name="Worley K.C."/>
            <person name="Wu D."/>
            <person name="Yang S."/>
            <person name="Yao Q.A."/>
            <person name="Ye J."/>
            <person name="Yeh R.-F."/>
            <person name="Zaveri J.S."/>
            <person name="Zhan M."/>
            <person name="Zhang G."/>
            <person name="Zhao Q."/>
            <person name="Zheng L."/>
            <person name="Zheng X.H."/>
            <person name="Zhong F.N."/>
            <person name="Zhong W."/>
            <person name="Zhou X."/>
            <person name="Zhu S.C."/>
            <person name="Zhu X."/>
            <person name="Smith H.O."/>
            <person name="Gibbs R.A."/>
            <person name="Myers E.W."/>
            <person name="Rubin G.M."/>
            <person name="Venter J.C."/>
        </authorList>
    </citation>
    <scope>NUCLEOTIDE SEQUENCE [LARGE SCALE GENOMIC DNA]</scope>
    <source>
        <strain evidence="4">Berkeley</strain>
    </source>
</reference>
<reference evidence="13 14" key="3">
    <citation type="journal article" date="2002" name="Genome Biol.">
        <title>Annotation of the Drosophila melanogaster euchromatic genome: a systematic review.</title>
        <authorList>
            <person name="Misra S."/>
            <person name="Crosby M.A."/>
            <person name="Mungall C.J."/>
            <person name="Matthews B.B."/>
            <person name="Campbell K.S."/>
            <person name="Hradecky P."/>
            <person name="Huang Y."/>
            <person name="Kaminker J.S."/>
            <person name="Millburn G.H."/>
            <person name="Prochnik S.E."/>
            <person name="Smith C.D."/>
            <person name="Tupy J.L."/>
            <person name="Whitfield E.J."/>
            <person name="Bayraktaroglu L."/>
            <person name="Berman B.P."/>
            <person name="Bettencourt B.R."/>
            <person name="Celniker S.E."/>
            <person name="de Grey A.D.N.J."/>
            <person name="Drysdale R.A."/>
            <person name="Harris N.L."/>
            <person name="Richter J."/>
            <person name="Russo S."/>
            <person name="Schroeder A.J."/>
            <person name="Shu S.Q."/>
            <person name="Stapleton M."/>
            <person name="Yamada C."/>
            <person name="Ashburner M."/>
            <person name="Gelbart W.M."/>
            <person name="Rubin G.M."/>
            <person name="Lewis S.E."/>
        </authorList>
    </citation>
    <scope>GENOME REANNOTATION</scope>
    <scope>ALTERNATIVE SPLICING</scope>
    <source>
        <strain>Berkeley</strain>
    </source>
</reference>
<reference evidence="13" key="4">
    <citation type="journal article" date="1994" name="Development">
        <title>Lola encodes a putative transcription factor required for axon growth and guidance in Drosophila.</title>
        <authorList>
            <person name="Giniger E."/>
            <person name="Tietje K."/>
            <person name="Jan L.Y."/>
            <person name="Jan Y.N."/>
        </authorList>
    </citation>
    <scope>FUNCTION</scope>
    <scope>SUBCELLULAR LOCATION</scope>
    <scope>DEVELOPMENTAL STAGE</scope>
</reference>
<reference evidence="13" key="5">
    <citation type="journal article" date="2002" name="Development">
        <title>Lola regulates midline crossing of CNS axons in Drosophila.</title>
        <authorList>
            <person name="Crowner D."/>
            <person name="Madden K."/>
            <person name="Goeke S."/>
            <person name="Giniger E."/>
        </authorList>
    </citation>
    <scope>FUNCTION</scope>
    <scope>MUTAGENESIS OF ALA-107</scope>
</reference>
<reference key="6">
    <citation type="journal article" date="2003" name="Genes Dev.">
        <title>Alternative trans-splicing of constant and variable exons of a Drosophila axon guidance gene, lola.</title>
        <authorList>
            <person name="Horiuchi T."/>
            <person name="Giniger E."/>
            <person name="Aigaki T."/>
        </authorList>
    </citation>
    <scope>TRANS-SPLICING</scope>
</reference>
<reference evidence="13" key="7">
    <citation type="journal article" date="2003" name="J. Biol. Chem.">
        <title>A developmentally regulated splice variant from the complex lola locus encoding multiple different zinc finger domain proteins interacts with the chromosomal kinase JIL-1.</title>
        <authorList>
            <person name="Zhang W."/>
            <person name="Wang Y."/>
            <person name="Long J."/>
            <person name="Girton J."/>
            <person name="Johansen J."/>
            <person name="Johansen K.M."/>
        </authorList>
    </citation>
    <scope>DEVELOPMENTAL STAGE</scope>
</reference>
<reference key="8">
    <citation type="journal article" date="2003" name="Nat. Neurosci.">
        <title>Alternative splicing of lola generates 19 transcription factors controlling axon guidance in Drosophila.</title>
        <authorList>
            <person name="Goeke S."/>
            <person name="Greene E.A."/>
            <person name="Grant P.K."/>
            <person name="Gates M.A."/>
            <person name="Crowner D."/>
            <person name="Aigaki T."/>
            <person name="Giniger E."/>
        </authorList>
    </citation>
    <scope>DEVELOPMENTAL STAGE</scope>
    <scope>TISSUE SPECIFICITY</scope>
</reference>
<accession>Q9V5M3</accession>
<accession>Q7KQY7</accession>
<accession>Q7KQY8</accession>
<accession>Q867I9</accession>
<accession>Q867J2</accession>
<accession>Q867U5</accession>
<accession>Q867Y0</accession>
<accession>Q86BC4</accession>
<proteinExistence type="evidence at protein level"/>
<protein>
    <recommendedName>
        <fullName>Longitudinals lacking protein, isoforms N/O/W/X/Y</fullName>
    </recommendedName>
</protein>
<feature type="chain" id="PRO_0000047077" description="Longitudinals lacking protein, isoforms N/O/W/X/Y">
    <location>
        <begin position="1"/>
        <end position="878"/>
    </location>
</feature>
<feature type="domain" description="BTB" evidence="1">
    <location>
        <begin position="32"/>
        <end position="97"/>
    </location>
</feature>
<feature type="zinc finger region" description="C2H2-type 1; degenerate" evidence="2">
    <location>
        <begin position="709"/>
        <end position="731"/>
    </location>
</feature>
<feature type="zinc finger region" description="C2H2-type 2" evidence="2">
    <location>
        <begin position="794"/>
        <end position="816"/>
    </location>
</feature>
<feature type="region of interest" description="Disordered" evidence="3">
    <location>
        <begin position="115"/>
        <end position="200"/>
    </location>
</feature>
<feature type="region of interest" description="Disordered" evidence="3">
    <location>
        <begin position="228"/>
        <end position="340"/>
    </location>
</feature>
<feature type="region of interest" description="Disordered" evidence="3">
    <location>
        <begin position="542"/>
        <end position="583"/>
    </location>
</feature>
<feature type="region of interest" description="Disordered" evidence="3">
    <location>
        <begin position="826"/>
        <end position="863"/>
    </location>
</feature>
<feature type="compositionally biased region" description="Low complexity" evidence="3">
    <location>
        <begin position="162"/>
        <end position="175"/>
    </location>
</feature>
<feature type="compositionally biased region" description="Low complexity" evidence="3">
    <location>
        <begin position="228"/>
        <end position="251"/>
    </location>
</feature>
<feature type="compositionally biased region" description="Low complexity" evidence="3">
    <location>
        <begin position="263"/>
        <end position="293"/>
    </location>
</feature>
<feature type="compositionally biased region" description="Low complexity" evidence="3">
    <location>
        <begin position="329"/>
        <end position="340"/>
    </location>
</feature>
<feature type="compositionally biased region" description="Low complexity" evidence="3">
    <location>
        <begin position="546"/>
        <end position="569"/>
    </location>
</feature>
<feature type="compositionally biased region" description="Polar residues" evidence="3">
    <location>
        <begin position="831"/>
        <end position="841"/>
    </location>
</feature>
<feature type="splice variant" id="VSP_051814" description="In isoform O." evidence="11">
    <original>DGYWTILETVPYSIASAAPNQTLTTATTLSNGGSSLLTGATVVVELPPDDLGNPVGNIQYTIPALTKNATTNTNTTSLLHKPQATTIQIVKQQHQQQHQQQHQHPQQQHQPQQQQHRQHLTIQQSQTHARQEYIKIDTSRLEDKMLLRDVMQYGATSIAMAPQSATTTVVSTHPVESGLLLADADEAERELELEAMKVDQHDEEHLLDDEGYVI</original>
    <variation>DIYPILGSLLGVDTSTSANPGSSANASDEFYGYHLNNNNTTTSSSTTISHAKNTSNSGAFSSGGGGGGGLSRDSFMQCKHCNRYYKSHQKLQEHVRKYCLKQKKYKCVSCEYRSRRKDHVLRHAKRKHCMLYEQSRDDEESLYVIRNEDDMSNDEEAVDGDDGDPEDGDPGGMDDVAAALCEINFDFAGRDLTITAVPALQESEEDDEDYDDDG</variation>
    <location>
        <begin position="455"/>
        <end position="668"/>
    </location>
</feature>
<feature type="splice variant" id="VSP_051813" description="In isoform X." evidence="11">
    <original>DGYWTILETVPYSIASAAPNQTLTTATTLSNGGSSLLTGATVVVELPPDDLGNPVGNIQYTIPALTKNATTNTNTTSLLHKPQATTIQIVKQQHQQQHQQQHQHPQQQHQPQQQQHRQHLTIQQSQTHARQEYIKIDTSRLEDKMLLR</original>
    <variation>VITVDRKYNLRTQESSGSSADLPSTSKQKVAAVQHKLAELASLDQKSENEEPTDLDNAASLKKAMATSDAMIALQQLASISTARSLQHLVQNMSNIDNSALVPGRKLPRNAAKRSPKYESNRCPLCSRVCRSQAFLNEHMRKEHSVLI</variation>
    <location>
        <begin position="455"/>
        <end position="602"/>
    </location>
</feature>
<feature type="splice variant" id="VSP_051815" description="In isoform Y." evidence="11">
    <location>
        <begin position="456"/>
        <end position="756"/>
    </location>
</feature>
<feature type="splice variant" id="VSP_051816" description="In isoform X." evidence="11">
    <location>
        <begin position="603"/>
        <end position="878"/>
    </location>
</feature>
<feature type="splice variant" id="VSP_051817" description="In isoform O." evidence="11">
    <location>
        <begin position="669"/>
        <end position="878"/>
    </location>
</feature>
<feature type="splice variant" id="VSP_051818" description="In isoform W." evidence="11">
    <original>CVLAQVVNFVRHGPKNQLLCQCG</original>
    <variation>YRSDLRKHMNQKHADSGEAILAT</variation>
    <location>
        <begin position="749"/>
        <end position="771"/>
    </location>
</feature>
<feature type="splice variant" id="VSP_051819" description="In isoform W." evidence="11">
    <location>
        <begin position="772"/>
        <end position="878"/>
    </location>
</feature>
<feature type="mutagenesis site" description="In ORE120; defective in embryonic axon guidance." evidence="5">
    <original>A</original>
    <variation>V</variation>
    <location>
        <position position="107"/>
    </location>
</feature>
<feature type="sequence conflict" description="In Ref. 1; BAC67594/BAC67614/BAC67634/BAC67654." evidence="13" ref="1">
    <original>E</original>
    <variation>D</variation>
    <location>
        <position position="786"/>
    </location>
</feature>
<feature type="sequence conflict" description="In Ref. 1; BAC67595/BAC67615/BAC67635/BAC67655." evidence="13" ref="1">
    <original>Q</original>
    <variation>P</variation>
    <location sequence="Q9V5M3-4">
        <position position="587"/>
    </location>
</feature>
<feature type="sequence conflict" description="In Ref. 1; BAC67594/BAC67614/BAC67634/BAC67654." evidence="13" ref="1">
    <original>E</original>
    <variation>D</variation>
    <location sequence="Q9V5M3-5">
        <position position="485"/>
    </location>
</feature>
<comment type="function">
    <text evidence="5 9">Putative transcription factor required for axon growth and guidance in the central and peripheral nervous systems. Repels CNS axons away from the midline by promoting the expression of the midline repellent sli and its receptor robo.</text>
</comment>
<comment type="subcellular location">
    <subcellularLocation>
        <location evidence="9">Nucleus</location>
    </subcellularLocation>
</comment>
<comment type="alternative products">
    <event type="alternative splicing"/>
    <isoform>
        <id>Q9V5M3-1</id>
        <name evidence="10">N</name>
        <sequence type="displayed"/>
    </isoform>
    <isoform>
        <id>Q9V5M3-2</id>
        <name evidence="7">O</name>
        <name evidence="11">Ohsako-P</name>
        <sequence type="described" ref="VSP_051814 VSP_051817"/>
    </isoform>
    <isoform>
        <id>Q9V5M3-3</id>
        <name evidence="7">W</name>
        <name evidence="11">Ohsako-Q</name>
        <sequence type="described" ref="VSP_051818 VSP_051819"/>
    </isoform>
    <isoform>
        <id>Q9V5M3-4</id>
        <name evidence="7">X</name>
        <name evidence="11">Ohsako-S</name>
        <sequence type="described" ref="VSP_051813 VSP_051816"/>
    </isoform>
    <isoform>
        <id>Q9V5M3-5</id>
        <name evidence="7">Y</name>
        <name evidence="11">Ohsako-R</name>
        <sequence type="described" ref="VSP_051815"/>
    </isoform>
    <isoform>
        <id>Q7KQZ4-2</id>
        <name evidence="7">A</name>
        <name evidence="11">Ohsako-D</name>
        <sequence type="external"/>
    </isoform>
    <isoform>
        <id>Q7KQZ4-1</id>
        <name>B</name>
        <name evidence="7">C</name>
        <name evidence="11">Ohsako-L</name>
        <sequence type="external"/>
    </isoform>
    <isoform>
        <id>Q7KQZ4-3</id>
        <name evidence="10">D</name>
        <name>E</name>
        <name evidence="11">Ohsako-F</name>
        <sequence type="external"/>
    </isoform>
    <isoform>
        <id>Q867Z4-2</id>
        <name evidence="7">F</name>
        <name evidence="11">Ohsako-I</name>
        <sequence type="external"/>
    </isoform>
    <isoform>
        <id>P42283-1</id>
        <name evidence="7">G</name>
        <name evidence="12">Long</name>
        <name evidence="11">Ohsako-T</name>
        <name>R</name>
        <sequence type="external"/>
    </isoform>
    <isoform>
        <id>P42284-3</id>
        <name evidence="7">H</name>
        <name evidence="11">Ohsako-M</name>
        <sequence type="external"/>
    </isoform>
    <isoform>
        <id>Q867Z4-1</id>
        <name evidence="7">I</name>
        <name evidence="11">Ohsako-K</name>
        <sequence type="external"/>
    </isoform>
    <isoform>
        <id>Q9V5M6-2</id>
        <name evidence="7">J</name>
        <name evidence="11">Ohsako-O</name>
        <sequence type="external"/>
    </isoform>
    <isoform>
        <id>Q867Z4-3</id>
        <name evidence="7">K</name>
        <name evidence="11">Ohsako-H</name>
        <sequence type="external"/>
    </isoform>
    <isoform>
        <id>Q7KQZ4-4</id>
        <name evidence="7">L</name>
        <name evidence="11">Ohsako-C</name>
        <sequence type="external"/>
    </isoform>
    <isoform>
        <id>P42284-1</id>
        <name evidence="7">M</name>
        <name evidence="12">Short</name>
        <name evidence="11">Ohsako-A</name>
        <sequence type="external"/>
    </isoform>
    <isoform>
        <id>Q9V5M6-1</id>
        <name evidence="7">P</name>
        <name evidence="11">Ohsako-N</name>
        <sequence type="external"/>
    </isoform>
    <isoform>
        <id>Q9V5M6-3</id>
        <name evidence="7">Q</name>
        <name evidence="11">Ohsako-B</name>
        <sequence type="external"/>
    </isoform>
    <isoform>
        <id>Q9V5M6-4</id>
        <name evidence="7">S</name>
        <sequence type="external"/>
    </isoform>
    <isoform>
        <id>Q867Z4-5</id>
        <name evidence="7">T</name>
        <name evidence="10">U</name>
        <name evidence="11">Ohsako-J</name>
        <sequence type="external"/>
    </isoform>
    <isoform>
        <id>P42284-2</id>
        <name evidence="7">V</name>
        <name evidence="11">Ohsako-G</name>
        <sequence type="external"/>
    </isoform>
    <isoform>
        <id>Q9V5M6-5</id>
        <name>Z</name>
        <name>Ohsako-E</name>
        <sequence type="external"/>
    </isoform>
    <text>Some isoforms may be generated by alternative trans-splicing of exons sequentially encoded by the same DNA strand.</text>
</comment>
<comment type="tissue specificity">
    <text evidence="8">By stage 11, isoform W, isoform X and isoform Y are expressed throughout the mesoderm, whereas isoform O is expressed in both mesoderm and ectoderm. From stage 15, expression of isoform O expands to all tissues, whereas expression of isoform W, isoform X and isoform Y becomes restricted during later stages; starting from stage 14 to 16, isoform W, isoform X and isoform Y are expressed in muscle. From stages 14 and 15, isoform W and isoform Y are expressed in the gut. For some isoforms, expression is also seen in specific types of cells in the embryo; isoform O is expressed in the ventral furrow at stage 5 and in the dorsal epidermis from stage 7. Isoform Y shows prominent expression in the gonad starting at stage 15.</text>
</comment>
<comment type="developmental stage">
    <text evidence="6 8 9">Expressed both maternally and zygotically. At least one isoform is present at each developmental stage.</text>
</comment>
<name>LOLA6_DROME</name>
<keyword id="KW-0025">Alternative splicing</keyword>
<keyword id="KW-0175">Coiled coil</keyword>
<keyword id="KW-0217">Developmental protein</keyword>
<keyword id="KW-0221">Differentiation</keyword>
<keyword id="KW-0238">DNA-binding</keyword>
<keyword id="KW-0479">Metal-binding</keyword>
<keyword id="KW-0524">Neurogenesis</keyword>
<keyword id="KW-0539">Nucleus</keyword>
<keyword id="KW-1185">Reference proteome</keyword>
<keyword id="KW-0677">Repeat</keyword>
<keyword id="KW-0804">Transcription</keyword>
<keyword id="KW-0805">Transcription regulation</keyword>
<keyword id="KW-0862">Zinc</keyword>
<keyword id="KW-0863">Zinc-finger</keyword>
<gene>
    <name evidence="16" type="primary">lola</name>
    <name evidence="16" type="ORF">CG12052</name>
</gene>